<feature type="chain" id="PRO_0000308725" description="Pre-rRNA-processing protein ipi1">
    <location>
        <begin position="1"/>
        <end position="352"/>
    </location>
</feature>
<reference key="1">
    <citation type="journal article" date="2003" name="Nature">
        <title>The genome sequence of the filamentous fungus Neurospora crassa.</title>
        <authorList>
            <person name="Galagan J.E."/>
            <person name="Calvo S.E."/>
            <person name="Borkovich K.A."/>
            <person name="Selker E.U."/>
            <person name="Read N.D."/>
            <person name="Jaffe D.B."/>
            <person name="FitzHugh W."/>
            <person name="Ma L.-J."/>
            <person name="Smirnov S."/>
            <person name="Purcell S."/>
            <person name="Rehman B."/>
            <person name="Elkins T."/>
            <person name="Engels R."/>
            <person name="Wang S."/>
            <person name="Nielsen C.B."/>
            <person name="Butler J."/>
            <person name="Endrizzi M."/>
            <person name="Qui D."/>
            <person name="Ianakiev P."/>
            <person name="Bell-Pedersen D."/>
            <person name="Nelson M.A."/>
            <person name="Werner-Washburne M."/>
            <person name="Selitrennikoff C.P."/>
            <person name="Kinsey J.A."/>
            <person name="Braun E.L."/>
            <person name="Zelter A."/>
            <person name="Schulte U."/>
            <person name="Kothe G.O."/>
            <person name="Jedd G."/>
            <person name="Mewes H.-W."/>
            <person name="Staben C."/>
            <person name="Marcotte E."/>
            <person name="Greenberg D."/>
            <person name="Roy A."/>
            <person name="Foley K."/>
            <person name="Naylor J."/>
            <person name="Stange-Thomann N."/>
            <person name="Barrett R."/>
            <person name="Gnerre S."/>
            <person name="Kamal M."/>
            <person name="Kamvysselis M."/>
            <person name="Mauceli E.W."/>
            <person name="Bielke C."/>
            <person name="Rudd S."/>
            <person name="Frishman D."/>
            <person name="Krystofova S."/>
            <person name="Rasmussen C."/>
            <person name="Metzenberg R.L."/>
            <person name="Perkins D.D."/>
            <person name="Kroken S."/>
            <person name="Cogoni C."/>
            <person name="Macino G."/>
            <person name="Catcheside D.E.A."/>
            <person name="Li W."/>
            <person name="Pratt R.J."/>
            <person name="Osmani S.A."/>
            <person name="DeSouza C.P.C."/>
            <person name="Glass N.L."/>
            <person name="Orbach M.J."/>
            <person name="Berglund J.A."/>
            <person name="Voelker R."/>
            <person name="Yarden O."/>
            <person name="Plamann M."/>
            <person name="Seiler S."/>
            <person name="Dunlap J.C."/>
            <person name="Radford A."/>
            <person name="Aramayo R."/>
            <person name="Natvig D.O."/>
            <person name="Alex L.A."/>
            <person name="Mannhaupt G."/>
            <person name="Ebbole D.J."/>
            <person name="Freitag M."/>
            <person name="Paulsen I."/>
            <person name="Sachs M.S."/>
            <person name="Lander E.S."/>
            <person name="Nusbaum C."/>
            <person name="Birren B.W."/>
        </authorList>
    </citation>
    <scope>NUCLEOTIDE SEQUENCE [LARGE SCALE GENOMIC DNA]</scope>
    <source>
        <strain>ATCC 24698 / 74-OR23-1A / CBS 708.71 / DSM 1257 / FGSC 987</strain>
    </source>
</reference>
<gene>
    <name type="primary">rrm-9</name>
    <name type="synonym">ipi1</name>
    <name type="ORF">NCU09094</name>
</gene>
<organism>
    <name type="scientific">Neurospora crassa (strain ATCC 24698 / 74-OR23-1A / CBS 708.71 / DSM 1257 / FGSC 987)</name>
    <dbReference type="NCBI Taxonomy" id="367110"/>
    <lineage>
        <taxon>Eukaryota</taxon>
        <taxon>Fungi</taxon>
        <taxon>Dikarya</taxon>
        <taxon>Ascomycota</taxon>
        <taxon>Pezizomycotina</taxon>
        <taxon>Sordariomycetes</taxon>
        <taxon>Sordariomycetidae</taxon>
        <taxon>Sordariales</taxon>
        <taxon>Sordariaceae</taxon>
        <taxon>Neurospora</taxon>
    </lineage>
</organism>
<dbReference type="EMBL" id="CM002236">
    <property type="protein sequence ID" value="ESA43787.1"/>
    <property type="molecule type" value="Genomic_DNA"/>
</dbReference>
<dbReference type="EMBL" id="CM002236">
    <property type="protein sequence ID" value="ESA43788.1"/>
    <property type="molecule type" value="Genomic_DNA"/>
</dbReference>
<dbReference type="RefSeq" id="XP_011393234.1">
    <property type="nucleotide sequence ID" value="XM_011394932.1"/>
</dbReference>
<dbReference type="RefSeq" id="XP_011393235.1">
    <property type="nucleotide sequence ID" value="XM_011394933.1"/>
</dbReference>
<dbReference type="SMR" id="Q7SFQ6"/>
<dbReference type="FunCoup" id="Q7SFQ6">
    <property type="interactions" value="212"/>
</dbReference>
<dbReference type="STRING" id="367110.Q7SFQ6"/>
<dbReference type="PaxDb" id="5141-EFNCRP00000008690"/>
<dbReference type="EnsemblFungi" id="ESA43787">
    <property type="protein sequence ID" value="ESA43787"/>
    <property type="gene ID" value="NCU09094"/>
</dbReference>
<dbReference type="EnsemblFungi" id="ESA43788">
    <property type="protein sequence ID" value="ESA43788"/>
    <property type="gene ID" value="NCU09094"/>
</dbReference>
<dbReference type="GeneID" id="3881035"/>
<dbReference type="KEGG" id="ncr:NCU09094"/>
<dbReference type="VEuPathDB" id="FungiDB:NCU09094"/>
<dbReference type="HOGENOM" id="CLU_050252_2_0_1"/>
<dbReference type="InParanoid" id="Q7SFQ6"/>
<dbReference type="OMA" id="CAGGWVK"/>
<dbReference type="OrthoDB" id="361362at2759"/>
<dbReference type="Proteomes" id="UP000001805">
    <property type="component" value="Chromosome 1, Linkage Group I"/>
</dbReference>
<dbReference type="GO" id="GO:0005634">
    <property type="term" value="C:nucleus"/>
    <property type="evidence" value="ECO:0000318"/>
    <property type="project" value="GO_Central"/>
</dbReference>
<dbReference type="GO" id="GO:0120330">
    <property type="term" value="C:rixosome complex"/>
    <property type="evidence" value="ECO:0000318"/>
    <property type="project" value="GO_Central"/>
</dbReference>
<dbReference type="GO" id="GO:0006364">
    <property type="term" value="P:rRNA processing"/>
    <property type="evidence" value="ECO:0000318"/>
    <property type="project" value="GO_Central"/>
</dbReference>
<dbReference type="FunFam" id="1.25.10.10:FF:001032">
    <property type="entry name" value="WGS project CABT00000000 data, contig 2.8"/>
    <property type="match status" value="1"/>
</dbReference>
<dbReference type="Gene3D" id="1.25.10.10">
    <property type="entry name" value="Leucine-rich Repeat Variant"/>
    <property type="match status" value="1"/>
</dbReference>
<dbReference type="InterPro" id="IPR011989">
    <property type="entry name" value="ARM-like"/>
</dbReference>
<dbReference type="InterPro" id="IPR016024">
    <property type="entry name" value="ARM-type_fold"/>
</dbReference>
<dbReference type="InterPro" id="IPR024679">
    <property type="entry name" value="Ipi1_N"/>
</dbReference>
<dbReference type="PANTHER" id="PTHR16056">
    <property type="entry name" value="REGULATOR OF MICROTUBULE DYNAMICS PROTEIN"/>
    <property type="match status" value="1"/>
</dbReference>
<dbReference type="PANTHER" id="PTHR16056:SF2">
    <property type="entry name" value="TESTIS-EXPRESSED PROTEIN 10"/>
    <property type="match status" value="1"/>
</dbReference>
<dbReference type="Pfam" id="PF12333">
    <property type="entry name" value="Ipi1_N"/>
    <property type="match status" value="1"/>
</dbReference>
<dbReference type="SUPFAM" id="SSF48371">
    <property type="entry name" value="ARM repeat"/>
    <property type="match status" value="1"/>
</dbReference>
<evidence type="ECO:0000250" key="1">
    <source>
        <dbReference type="UniProtKB" id="P38803"/>
    </source>
</evidence>
<evidence type="ECO:0000305" key="2"/>
<accession>Q7SFQ6</accession>
<accession>V5INZ0</accession>
<protein>
    <recommendedName>
        <fullName>Pre-rRNA-processing protein ipi1</fullName>
    </recommendedName>
</protein>
<proteinExistence type="inferred from homology"/>
<sequence>MGSSNKKKKEKKKDFNKAKLKVGKAKAKAANFTDTSFKSKSIVVNQHTLAALDGVDLVGLFKQHLNQAINSKSDKLRQEALVQLTKDLSSKPIFNPVGVPNLLTKLLPLITDSVANVRTNFLKLLRALPPSDVAPHVEKILMYIRGGMTHLSTEIRSDTLSVLDWLIDVCPDETVSCPGGWLKTMNSFSSMLGWNPSVASTLSVKGWTSATKTSLNKVSKKNGEAQAKQITTLAKFLEAGFRPETPLPYDEQRYWDSIYRMPTTPNPFAYLNLWGAQRDEDGEMYPDRISRQQVFERKWRAAIKTGVMGAKQEGGVIGRAASVLDKVLRTAEEGGKKVVEEQKIEEVEEAEA</sequence>
<keyword id="KW-0539">Nucleus</keyword>
<keyword id="KW-1185">Reference proteome</keyword>
<keyword id="KW-0690">Ribosome biogenesis</keyword>
<keyword id="KW-0698">rRNA processing</keyword>
<comment type="function">
    <text evidence="1">Component of the RIX1 complex required for processing of ITS2 sequences from 35S pre-rRNA.</text>
</comment>
<comment type="subunit">
    <text evidence="1">Component of the RIX1 complex, composed of rrm-9/ipi1, rix1/ipi2 and ipi3 in a 1:2:2 stoichiometry. The complex interacts (via rix1) with mdn1 (via its hexameric AAA ATPase ring) and the pre-60S ribosome particles.</text>
</comment>
<comment type="subcellular location">
    <subcellularLocation>
        <location evidence="1">Nucleus</location>
    </subcellularLocation>
</comment>
<comment type="similarity">
    <text evidence="2">Belongs to the IPI1/TEX10 family.</text>
</comment>
<name>IPI1_NEUCR</name>